<sequence>MKMINKLIVPVTASALLLGACGASATDSKENTLISSKAGDVTVADTMKKIGKDQIANASFTEMLNKILADKYKNKVNDKKIDEQIEKMQKQYGGKDKFEKALQQQGLTADKYKENLRTAAYHKELLSDKIKISDSEIKEDSKKASHILIKVKSKKSDKEGLDDKEAKQKAEEIQKEVSKDPSKFGEIAKKESMDTGSAKKDGELGYVLKGQTDKDFEKALFKLKDGEVSEVVKSSFGYHIIKADKPTDFNSEKQSLKEKLVDQKVQKNPKLLTDAYKDLLKEYDVDFKDRDIKSVVEDKILNPEKLKQGGAQGGQSGMSQ</sequence>
<gene>
    <name evidence="1" type="primary">prsA</name>
    <name type="ordered locus">SAUSA300_1790</name>
</gene>
<protein>
    <recommendedName>
        <fullName evidence="1">Foldase protein PrsA</fullName>
        <ecNumber evidence="1">5.2.1.8</ecNumber>
    </recommendedName>
</protein>
<feature type="signal peptide" evidence="1">
    <location>
        <begin position="1"/>
        <end position="20"/>
    </location>
</feature>
<feature type="chain" id="PRO_1000085056" description="Foldase protein PrsA">
    <location>
        <begin position="21"/>
        <end position="320"/>
    </location>
</feature>
<feature type="domain" description="PpiC" evidence="1">
    <location>
        <begin position="139"/>
        <end position="245"/>
    </location>
</feature>
<feature type="region of interest" description="Disordered" evidence="2">
    <location>
        <begin position="159"/>
        <end position="198"/>
    </location>
</feature>
<feature type="lipid moiety-binding region" description="N-palmitoyl cysteine" evidence="1">
    <location>
        <position position="21"/>
    </location>
</feature>
<feature type="lipid moiety-binding region" description="S-diacylglycerol cysteine" evidence="1">
    <location>
        <position position="21"/>
    </location>
</feature>
<name>PRSA_STAA3</name>
<accession>Q2FFQ5</accession>
<keyword id="KW-1003">Cell membrane</keyword>
<keyword id="KW-0413">Isomerase</keyword>
<keyword id="KW-0449">Lipoprotein</keyword>
<keyword id="KW-0472">Membrane</keyword>
<keyword id="KW-0564">Palmitate</keyword>
<keyword id="KW-0697">Rotamase</keyword>
<keyword id="KW-0732">Signal</keyword>
<evidence type="ECO:0000255" key="1">
    <source>
        <dbReference type="HAMAP-Rule" id="MF_01145"/>
    </source>
</evidence>
<evidence type="ECO:0000256" key="2">
    <source>
        <dbReference type="SAM" id="MobiDB-lite"/>
    </source>
</evidence>
<organism>
    <name type="scientific">Staphylococcus aureus (strain USA300)</name>
    <dbReference type="NCBI Taxonomy" id="367830"/>
    <lineage>
        <taxon>Bacteria</taxon>
        <taxon>Bacillati</taxon>
        <taxon>Bacillota</taxon>
        <taxon>Bacilli</taxon>
        <taxon>Bacillales</taxon>
        <taxon>Staphylococcaceae</taxon>
        <taxon>Staphylococcus</taxon>
    </lineage>
</organism>
<comment type="function">
    <text evidence="1">Plays a major role in protein secretion by helping the post-translocational extracellular folding of several secreted proteins.</text>
</comment>
<comment type="catalytic activity">
    <reaction evidence="1">
        <text>[protein]-peptidylproline (omega=180) = [protein]-peptidylproline (omega=0)</text>
        <dbReference type="Rhea" id="RHEA:16237"/>
        <dbReference type="Rhea" id="RHEA-COMP:10747"/>
        <dbReference type="Rhea" id="RHEA-COMP:10748"/>
        <dbReference type="ChEBI" id="CHEBI:83833"/>
        <dbReference type="ChEBI" id="CHEBI:83834"/>
        <dbReference type="EC" id="5.2.1.8"/>
    </reaction>
</comment>
<comment type="subcellular location">
    <subcellularLocation>
        <location evidence="1">Cell membrane</location>
        <topology evidence="1">Lipid-anchor</topology>
    </subcellularLocation>
</comment>
<comment type="similarity">
    <text evidence="1">Belongs to the PrsA family.</text>
</comment>
<dbReference type="EC" id="5.2.1.8" evidence="1"/>
<dbReference type="EMBL" id="CP000255">
    <property type="protein sequence ID" value="ABD22844.1"/>
    <property type="molecule type" value="Genomic_DNA"/>
</dbReference>
<dbReference type="RefSeq" id="WP_000782121.1">
    <property type="nucleotide sequence ID" value="NZ_CP027476.1"/>
</dbReference>
<dbReference type="SMR" id="Q2FFQ5"/>
<dbReference type="KEGG" id="saa:SAUSA300_1790"/>
<dbReference type="HOGENOM" id="CLU_034646_6_2_9"/>
<dbReference type="OMA" id="TMKGSTI"/>
<dbReference type="BRENDA" id="5.2.1.8">
    <property type="organism ID" value="3352"/>
</dbReference>
<dbReference type="Proteomes" id="UP000001939">
    <property type="component" value="Chromosome"/>
</dbReference>
<dbReference type="GO" id="GO:0005886">
    <property type="term" value="C:plasma membrane"/>
    <property type="evidence" value="ECO:0007669"/>
    <property type="project" value="UniProtKB-SubCell"/>
</dbReference>
<dbReference type="GO" id="GO:0003755">
    <property type="term" value="F:peptidyl-prolyl cis-trans isomerase activity"/>
    <property type="evidence" value="ECO:0007669"/>
    <property type="project" value="UniProtKB-UniRule"/>
</dbReference>
<dbReference type="GO" id="GO:0006457">
    <property type="term" value="P:protein folding"/>
    <property type="evidence" value="ECO:0007669"/>
    <property type="project" value="UniProtKB-UniRule"/>
</dbReference>
<dbReference type="Gene3D" id="3.10.50.40">
    <property type="match status" value="1"/>
</dbReference>
<dbReference type="Gene3D" id="1.10.4030.10">
    <property type="entry name" value="Porin chaperone SurA, peptide-binding domain"/>
    <property type="match status" value="1"/>
</dbReference>
<dbReference type="HAMAP" id="MF_01145">
    <property type="entry name" value="Foldase_PrsA"/>
    <property type="match status" value="1"/>
</dbReference>
<dbReference type="InterPro" id="IPR023059">
    <property type="entry name" value="Foldase_PrsA"/>
</dbReference>
<dbReference type="InterPro" id="IPR046357">
    <property type="entry name" value="PPIase_dom_sf"/>
</dbReference>
<dbReference type="InterPro" id="IPR000297">
    <property type="entry name" value="PPIase_PpiC"/>
</dbReference>
<dbReference type="InterPro" id="IPR050245">
    <property type="entry name" value="PrsA_foldase"/>
</dbReference>
<dbReference type="InterPro" id="IPR027304">
    <property type="entry name" value="Trigger_fact/SurA_dom_sf"/>
</dbReference>
<dbReference type="PANTHER" id="PTHR47245:SF1">
    <property type="entry name" value="FOLDASE PROTEIN PRSA"/>
    <property type="match status" value="1"/>
</dbReference>
<dbReference type="PANTHER" id="PTHR47245">
    <property type="entry name" value="PEPTIDYLPROLYL ISOMERASE"/>
    <property type="match status" value="1"/>
</dbReference>
<dbReference type="Pfam" id="PF00639">
    <property type="entry name" value="Rotamase"/>
    <property type="match status" value="1"/>
</dbReference>
<dbReference type="SUPFAM" id="SSF54534">
    <property type="entry name" value="FKBP-like"/>
    <property type="match status" value="1"/>
</dbReference>
<dbReference type="SUPFAM" id="SSF109998">
    <property type="entry name" value="Triger factor/SurA peptide-binding domain-like"/>
    <property type="match status" value="1"/>
</dbReference>
<dbReference type="PROSITE" id="PS50198">
    <property type="entry name" value="PPIC_PPIASE_2"/>
    <property type="match status" value="1"/>
</dbReference>
<dbReference type="PROSITE" id="PS51257">
    <property type="entry name" value="PROKAR_LIPOPROTEIN"/>
    <property type="match status" value="1"/>
</dbReference>
<proteinExistence type="inferred from homology"/>
<reference key="1">
    <citation type="journal article" date="2006" name="Lancet">
        <title>Complete genome sequence of USA300, an epidemic clone of community-acquired meticillin-resistant Staphylococcus aureus.</title>
        <authorList>
            <person name="Diep B.A."/>
            <person name="Gill S.R."/>
            <person name="Chang R.F."/>
            <person name="Phan T.H."/>
            <person name="Chen J.H."/>
            <person name="Davidson M.G."/>
            <person name="Lin F."/>
            <person name="Lin J."/>
            <person name="Carleton H.A."/>
            <person name="Mongodin E.F."/>
            <person name="Sensabaugh G.F."/>
            <person name="Perdreau-Remington F."/>
        </authorList>
    </citation>
    <scope>NUCLEOTIDE SEQUENCE [LARGE SCALE GENOMIC DNA]</scope>
    <source>
        <strain>USA300</strain>
    </source>
</reference>